<dbReference type="EC" id="6.3.2.6" evidence="1"/>
<dbReference type="EMBL" id="AL766843">
    <property type="protein sequence ID" value="CAD45668.1"/>
    <property type="molecule type" value="Genomic_DNA"/>
</dbReference>
<dbReference type="RefSeq" id="WP_001064659.1">
    <property type="nucleotide sequence ID" value="NC_004368.1"/>
</dbReference>
<dbReference type="SMR" id="Q8E7X2"/>
<dbReference type="KEGG" id="san:gbs0023"/>
<dbReference type="eggNOG" id="COG0152">
    <property type="taxonomic scope" value="Bacteria"/>
</dbReference>
<dbReference type="HOGENOM" id="CLU_061495_2_0_9"/>
<dbReference type="UniPathway" id="UPA00074">
    <property type="reaction ID" value="UER00131"/>
</dbReference>
<dbReference type="Proteomes" id="UP000000823">
    <property type="component" value="Chromosome"/>
</dbReference>
<dbReference type="GO" id="GO:0005524">
    <property type="term" value="F:ATP binding"/>
    <property type="evidence" value="ECO:0007669"/>
    <property type="project" value="UniProtKB-KW"/>
</dbReference>
<dbReference type="GO" id="GO:0004639">
    <property type="term" value="F:phosphoribosylaminoimidazolesuccinocarboxamide synthase activity"/>
    <property type="evidence" value="ECO:0007669"/>
    <property type="project" value="UniProtKB-UniRule"/>
</dbReference>
<dbReference type="GO" id="GO:0006189">
    <property type="term" value="P:'de novo' IMP biosynthetic process"/>
    <property type="evidence" value="ECO:0007669"/>
    <property type="project" value="UniProtKB-UniRule"/>
</dbReference>
<dbReference type="GO" id="GO:0009236">
    <property type="term" value="P:cobalamin biosynthetic process"/>
    <property type="evidence" value="ECO:0007669"/>
    <property type="project" value="InterPro"/>
</dbReference>
<dbReference type="CDD" id="cd01415">
    <property type="entry name" value="SAICAR_synt_PurC"/>
    <property type="match status" value="1"/>
</dbReference>
<dbReference type="FunFam" id="3.30.470.20:FF:000006">
    <property type="entry name" value="Phosphoribosylaminoimidazole-succinocarboxamide synthase"/>
    <property type="match status" value="1"/>
</dbReference>
<dbReference type="Gene3D" id="3.30.470.20">
    <property type="entry name" value="ATP-grasp fold, B domain"/>
    <property type="match status" value="1"/>
</dbReference>
<dbReference type="Gene3D" id="3.30.200.20">
    <property type="entry name" value="Phosphorylase Kinase, domain 1"/>
    <property type="match status" value="1"/>
</dbReference>
<dbReference type="HAMAP" id="MF_00137">
    <property type="entry name" value="SAICAR_synth"/>
    <property type="match status" value="1"/>
</dbReference>
<dbReference type="InterPro" id="IPR028923">
    <property type="entry name" value="SAICAR_synt/ADE2_N"/>
</dbReference>
<dbReference type="InterPro" id="IPR033934">
    <property type="entry name" value="SAICAR_synt_PurC"/>
</dbReference>
<dbReference type="InterPro" id="IPR001636">
    <property type="entry name" value="SAICAR_synth"/>
</dbReference>
<dbReference type="InterPro" id="IPR050089">
    <property type="entry name" value="SAICAR_synthetase"/>
</dbReference>
<dbReference type="InterPro" id="IPR018236">
    <property type="entry name" value="SAICAR_synthetase_CS"/>
</dbReference>
<dbReference type="NCBIfam" id="TIGR00081">
    <property type="entry name" value="purC"/>
    <property type="match status" value="1"/>
</dbReference>
<dbReference type="PANTHER" id="PTHR43599">
    <property type="entry name" value="MULTIFUNCTIONAL PROTEIN ADE2"/>
    <property type="match status" value="1"/>
</dbReference>
<dbReference type="PANTHER" id="PTHR43599:SF3">
    <property type="entry name" value="SI:DKEY-6E2.2"/>
    <property type="match status" value="1"/>
</dbReference>
<dbReference type="Pfam" id="PF01259">
    <property type="entry name" value="SAICAR_synt"/>
    <property type="match status" value="1"/>
</dbReference>
<dbReference type="SUPFAM" id="SSF56104">
    <property type="entry name" value="SAICAR synthase-like"/>
    <property type="match status" value="1"/>
</dbReference>
<dbReference type="PROSITE" id="PS01057">
    <property type="entry name" value="SAICAR_SYNTHETASE_1"/>
    <property type="match status" value="1"/>
</dbReference>
<dbReference type="PROSITE" id="PS01058">
    <property type="entry name" value="SAICAR_SYNTHETASE_2"/>
    <property type="match status" value="1"/>
</dbReference>
<reference key="1">
    <citation type="journal article" date="2002" name="Mol. Microbiol.">
        <title>Genome sequence of Streptococcus agalactiae, a pathogen causing invasive neonatal disease.</title>
        <authorList>
            <person name="Glaser P."/>
            <person name="Rusniok C."/>
            <person name="Buchrieser C."/>
            <person name="Chevalier F."/>
            <person name="Frangeul L."/>
            <person name="Msadek T."/>
            <person name="Zouine M."/>
            <person name="Couve E."/>
            <person name="Lalioui L."/>
            <person name="Poyart C."/>
            <person name="Trieu-Cuot P."/>
            <person name="Kunst F."/>
        </authorList>
    </citation>
    <scope>NUCLEOTIDE SEQUENCE [LARGE SCALE GENOMIC DNA]</scope>
    <source>
        <strain>NEM316</strain>
    </source>
</reference>
<comment type="catalytic activity">
    <reaction evidence="1">
        <text>5-amino-1-(5-phospho-D-ribosyl)imidazole-4-carboxylate + L-aspartate + ATP = (2S)-2-[5-amino-1-(5-phospho-beta-D-ribosyl)imidazole-4-carboxamido]succinate + ADP + phosphate + 2 H(+)</text>
        <dbReference type="Rhea" id="RHEA:22628"/>
        <dbReference type="ChEBI" id="CHEBI:15378"/>
        <dbReference type="ChEBI" id="CHEBI:29991"/>
        <dbReference type="ChEBI" id="CHEBI:30616"/>
        <dbReference type="ChEBI" id="CHEBI:43474"/>
        <dbReference type="ChEBI" id="CHEBI:58443"/>
        <dbReference type="ChEBI" id="CHEBI:77657"/>
        <dbReference type="ChEBI" id="CHEBI:456216"/>
        <dbReference type="EC" id="6.3.2.6"/>
    </reaction>
</comment>
<comment type="pathway">
    <text evidence="1">Purine metabolism; IMP biosynthesis via de novo pathway; 5-amino-1-(5-phospho-D-ribosyl)imidazole-4-carboxamide from 5-amino-1-(5-phospho-D-ribosyl)imidazole-4-carboxylate: step 1/2.</text>
</comment>
<comment type="similarity">
    <text evidence="1">Belongs to the SAICAR synthetase family.</text>
</comment>
<protein>
    <recommendedName>
        <fullName evidence="1">Phosphoribosylaminoimidazole-succinocarboxamide synthase</fullName>
        <ecNumber evidence="1">6.3.2.6</ecNumber>
    </recommendedName>
    <alternativeName>
        <fullName evidence="1">SAICAR synthetase</fullName>
    </alternativeName>
</protein>
<proteinExistence type="inferred from homology"/>
<accession>Q8E7X2</accession>
<feature type="chain" id="PRO_0000100877" description="Phosphoribosylaminoimidazole-succinocarboxamide synthase">
    <location>
        <begin position="1"/>
        <end position="234"/>
    </location>
</feature>
<organism>
    <name type="scientific">Streptococcus agalactiae serotype III (strain NEM316)</name>
    <dbReference type="NCBI Taxonomy" id="211110"/>
    <lineage>
        <taxon>Bacteria</taxon>
        <taxon>Bacillati</taxon>
        <taxon>Bacillota</taxon>
        <taxon>Bacilli</taxon>
        <taxon>Lactobacillales</taxon>
        <taxon>Streptococcaceae</taxon>
        <taxon>Streptococcus</taxon>
    </lineage>
</organism>
<gene>
    <name evidence="1" type="primary">purC</name>
    <name type="ordered locus">gbs0023</name>
</gene>
<evidence type="ECO:0000255" key="1">
    <source>
        <dbReference type="HAMAP-Rule" id="MF_00137"/>
    </source>
</evidence>
<sequence length="234" mass="26878">MNNQLIYTGKAKDIYSTKDENVIRTVYKDQATMLNGARKETIDGKGALNNQISSLIFEKLNMAGVVTHYIEQISKNEQLNKKVDIIPLEVVLRNVTAGSFSKRFGVEEGRVLETPIVEFYYKNDDLNDPFINDEHMKFLGIVNDEEIAYLKGETRRINELLKDWFAQIGLNLIDFKLEFGFDKDGKIILADEFSPDNCRLWDAEGNHMDKDVFRRDLGSLTDVYQVVLEKLIAL</sequence>
<name>PUR7_STRA3</name>
<keyword id="KW-0067">ATP-binding</keyword>
<keyword id="KW-0436">Ligase</keyword>
<keyword id="KW-0547">Nucleotide-binding</keyword>
<keyword id="KW-0658">Purine biosynthesis</keyword>